<protein>
    <recommendedName>
        <fullName evidence="2">NAD-dependent protein deacylase</fullName>
        <ecNumber evidence="2">2.3.1.286</ecNumber>
    </recommendedName>
    <alternativeName>
        <fullName evidence="2">Regulatory protein SIR2 homolog</fullName>
    </alternativeName>
</protein>
<feature type="chain" id="PRO_0000110375" description="NAD-dependent protein deacylase">
    <location>
        <begin position="1"/>
        <end position="278"/>
    </location>
</feature>
<feature type="domain" description="Deacetylase sirtuin-type" evidence="3">
    <location>
        <begin position="22"/>
        <end position="270"/>
    </location>
</feature>
<feature type="active site" description="Proton acceptor" evidence="2">
    <location>
        <position position="145"/>
    </location>
</feature>
<feature type="binding site" evidence="2">
    <location>
        <begin position="46"/>
        <end position="65"/>
    </location>
    <ligand>
        <name>NAD(+)</name>
        <dbReference type="ChEBI" id="CHEBI:57540"/>
    </ligand>
</feature>
<feature type="binding site" evidence="2">
    <location>
        <position position="90"/>
    </location>
    <ligand>
        <name>substrate</name>
    </ligand>
</feature>
<feature type="binding site" evidence="2">
    <location>
        <position position="93"/>
    </location>
    <ligand>
        <name>substrate</name>
    </ligand>
</feature>
<feature type="binding site" evidence="2">
    <location>
        <begin position="127"/>
        <end position="130"/>
    </location>
    <ligand>
        <name>NAD(+)</name>
        <dbReference type="ChEBI" id="CHEBI:57540"/>
    </ligand>
</feature>
<feature type="binding site" evidence="2">
    <location>
        <position position="153"/>
    </location>
    <ligand>
        <name>Zn(2+)</name>
        <dbReference type="ChEBI" id="CHEBI:29105"/>
    </ligand>
</feature>
<feature type="binding site" evidence="2">
    <location>
        <position position="172"/>
    </location>
    <ligand>
        <name>Zn(2+)</name>
        <dbReference type="ChEBI" id="CHEBI:29105"/>
    </ligand>
</feature>
<feature type="binding site" evidence="2">
    <location>
        <begin position="212"/>
        <end position="214"/>
    </location>
    <ligand>
        <name>NAD(+)</name>
        <dbReference type="ChEBI" id="CHEBI:57540"/>
    </ligand>
</feature>
<feature type="binding site" evidence="2">
    <location>
        <begin position="238"/>
        <end position="240"/>
    </location>
    <ligand>
        <name>NAD(+)</name>
        <dbReference type="ChEBI" id="CHEBI:57540"/>
    </ligand>
</feature>
<feature type="binding site" evidence="2">
    <location>
        <position position="256"/>
    </location>
    <ligand>
        <name>NAD(+)</name>
        <dbReference type="ChEBI" id="CHEBI:57540"/>
    </ligand>
</feature>
<feature type="splice variant" id="VSP_058465" description="In isoform CobB-Short." evidence="1">
    <location>
        <begin position="1"/>
        <end position="35"/>
    </location>
</feature>
<gene>
    <name evidence="2" type="primary">cobB</name>
    <name type="ordered locus">YPTB2438</name>
</gene>
<organism>
    <name type="scientific">Yersinia pseudotuberculosis serotype I (strain IP32953)</name>
    <dbReference type="NCBI Taxonomy" id="273123"/>
    <lineage>
        <taxon>Bacteria</taxon>
        <taxon>Pseudomonadati</taxon>
        <taxon>Pseudomonadota</taxon>
        <taxon>Gammaproteobacteria</taxon>
        <taxon>Enterobacterales</taxon>
        <taxon>Yersiniaceae</taxon>
        <taxon>Yersinia</taxon>
    </lineage>
</organism>
<reference key="1">
    <citation type="journal article" date="2004" name="Proc. Natl. Acad. Sci. U.S.A.">
        <title>Insights into the evolution of Yersinia pestis through whole-genome comparison with Yersinia pseudotuberculosis.</title>
        <authorList>
            <person name="Chain P.S.G."/>
            <person name="Carniel E."/>
            <person name="Larimer F.W."/>
            <person name="Lamerdin J."/>
            <person name="Stoutland P.O."/>
            <person name="Regala W.M."/>
            <person name="Georgescu A.M."/>
            <person name="Vergez L.M."/>
            <person name="Land M.L."/>
            <person name="Motin V.L."/>
            <person name="Brubaker R.R."/>
            <person name="Fowler J."/>
            <person name="Hinnebusch J."/>
            <person name="Marceau M."/>
            <person name="Medigue C."/>
            <person name="Simonet M."/>
            <person name="Chenal-Francisque V."/>
            <person name="Souza B."/>
            <person name="Dacheux D."/>
            <person name="Elliott J.M."/>
            <person name="Derbise A."/>
            <person name="Hauser L.J."/>
            <person name="Garcia E."/>
        </authorList>
    </citation>
    <scope>NUCLEOTIDE SEQUENCE [LARGE SCALE GENOMIC DNA]</scope>
    <source>
        <strain>IP32953</strain>
    </source>
</reference>
<accession>Q669P6</accession>
<dbReference type="EC" id="2.3.1.286" evidence="2"/>
<dbReference type="EMBL" id="BX936398">
    <property type="protein sequence ID" value="CAH21676.1"/>
    <property type="molecule type" value="Genomic_DNA"/>
</dbReference>
<dbReference type="RefSeq" id="WP_002210921.1">
    <property type="nucleotide sequence ID" value="NZ_CP009712.1"/>
</dbReference>
<dbReference type="SMR" id="Q669P6"/>
<dbReference type="GeneID" id="57976943"/>
<dbReference type="KEGG" id="ypo:BZ17_12"/>
<dbReference type="KEGG" id="yps:YPTB2438"/>
<dbReference type="PATRIC" id="fig|273123.14.peg.13"/>
<dbReference type="Proteomes" id="UP000001011">
    <property type="component" value="Chromosome"/>
</dbReference>
<dbReference type="GO" id="GO:0005737">
    <property type="term" value="C:cytoplasm"/>
    <property type="evidence" value="ECO:0007669"/>
    <property type="project" value="UniProtKB-SubCell"/>
</dbReference>
<dbReference type="GO" id="GO:0017136">
    <property type="term" value="F:histone deacetylase activity, NAD-dependent"/>
    <property type="evidence" value="ECO:0007669"/>
    <property type="project" value="TreeGrafter"/>
</dbReference>
<dbReference type="GO" id="GO:0070403">
    <property type="term" value="F:NAD+ binding"/>
    <property type="evidence" value="ECO:0007669"/>
    <property type="project" value="UniProtKB-UniRule"/>
</dbReference>
<dbReference type="GO" id="GO:0160013">
    <property type="term" value="F:NAD-dependent protein de-2-hydroxyisobutyrylase activity"/>
    <property type="evidence" value="ECO:0007669"/>
    <property type="project" value="RHEA"/>
</dbReference>
<dbReference type="GO" id="GO:0036054">
    <property type="term" value="F:protein-malonyllysine demalonylase activity"/>
    <property type="evidence" value="ECO:0007669"/>
    <property type="project" value="InterPro"/>
</dbReference>
<dbReference type="GO" id="GO:0036055">
    <property type="term" value="F:protein-succinyllysine desuccinylase activity"/>
    <property type="evidence" value="ECO:0007669"/>
    <property type="project" value="UniProtKB-UniRule"/>
</dbReference>
<dbReference type="GO" id="GO:0008270">
    <property type="term" value="F:zinc ion binding"/>
    <property type="evidence" value="ECO:0007669"/>
    <property type="project" value="UniProtKB-UniRule"/>
</dbReference>
<dbReference type="CDD" id="cd01412">
    <property type="entry name" value="SIRT5_Af1_CobB"/>
    <property type="match status" value="1"/>
</dbReference>
<dbReference type="Gene3D" id="3.30.1600.10">
    <property type="entry name" value="SIR2/SIRT2 'Small Domain"/>
    <property type="match status" value="1"/>
</dbReference>
<dbReference type="Gene3D" id="3.40.50.1220">
    <property type="entry name" value="TPP-binding domain"/>
    <property type="match status" value="1"/>
</dbReference>
<dbReference type="HAMAP" id="MF_01121">
    <property type="entry name" value="Sirtuin_ClassIII"/>
    <property type="match status" value="1"/>
</dbReference>
<dbReference type="InterPro" id="IPR029035">
    <property type="entry name" value="DHS-like_NAD/FAD-binding_dom"/>
</dbReference>
<dbReference type="InterPro" id="IPR050134">
    <property type="entry name" value="NAD-dep_sirtuin_deacylases"/>
</dbReference>
<dbReference type="InterPro" id="IPR003000">
    <property type="entry name" value="Sirtuin"/>
</dbReference>
<dbReference type="InterPro" id="IPR026591">
    <property type="entry name" value="Sirtuin_cat_small_dom_sf"/>
</dbReference>
<dbReference type="InterPro" id="IPR027546">
    <property type="entry name" value="Sirtuin_class_III"/>
</dbReference>
<dbReference type="InterPro" id="IPR026590">
    <property type="entry name" value="Ssirtuin_cat_dom"/>
</dbReference>
<dbReference type="NCBIfam" id="NF001755">
    <property type="entry name" value="PRK00481.1-5"/>
    <property type="match status" value="1"/>
</dbReference>
<dbReference type="PANTHER" id="PTHR11085:SF4">
    <property type="entry name" value="NAD-DEPENDENT PROTEIN DEACYLASE"/>
    <property type="match status" value="1"/>
</dbReference>
<dbReference type="PANTHER" id="PTHR11085">
    <property type="entry name" value="NAD-DEPENDENT PROTEIN DEACYLASE SIRTUIN-5, MITOCHONDRIAL-RELATED"/>
    <property type="match status" value="1"/>
</dbReference>
<dbReference type="Pfam" id="PF02146">
    <property type="entry name" value="SIR2"/>
    <property type="match status" value="1"/>
</dbReference>
<dbReference type="SUPFAM" id="SSF52467">
    <property type="entry name" value="DHS-like NAD/FAD-binding domain"/>
    <property type="match status" value="1"/>
</dbReference>
<dbReference type="PROSITE" id="PS50305">
    <property type="entry name" value="SIRTUIN"/>
    <property type="match status" value="1"/>
</dbReference>
<sequence>MRIRHRLCRFRKSKHVRHQRFRSRIFHRDSAVAKEMKKPFVVVLTGAGISAESGIRTFRADDGLWEDHRVEDVATPEGYRRDPELVQRFYNERRRQLQQPDIAPNAAHFALADLEAVLGDNLVLITQNIDNLHERAGSKRVIHMHGELLKVRCTQSGQVLDWQGDLSADERCHCCQFPSPLRPHIVWFGEMPMGMDDIYQALAEADFFISIGTSGHVYPAAGFVHESHLHGAHTVELNLEPSQVESQFDEKHYGLASKVVPEYIREFLTTCGENRQGD</sequence>
<comment type="function">
    <text evidence="2">NAD-dependent lysine deacetylase that specifically removes acetyl groups on target proteins. Also acts as a protein-lysine deacylase by mediating protein desuccinylation and de-2-hydroxyisobutyrylation. Modulates the activities of several proteins which are inactive in their acylated form.</text>
</comment>
<comment type="catalytic activity">
    <reaction evidence="2">
        <text>N(6)-acetyl-L-lysyl-[protein] + NAD(+) + H2O = 2''-O-acetyl-ADP-D-ribose + nicotinamide + L-lysyl-[protein]</text>
        <dbReference type="Rhea" id="RHEA:43636"/>
        <dbReference type="Rhea" id="RHEA-COMP:9752"/>
        <dbReference type="Rhea" id="RHEA-COMP:10731"/>
        <dbReference type="ChEBI" id="CHEBI:15377"/>
        <dbReference type="ChEBI" id="CHEBI:17154"/>
        <dbReference type="ChEBI" id="CHEBI:29969"/>
        <dbReference type="ChEBI" id="CHEBI:57540"/>
        <dbReference type="ChEBI" id="CHEBI:61930"/>
        <dbReference type="ChEBI" id="CHEBI:83767"/>
        <dbReference type="EC" id="2.3.1.286"/>
    </reaction>
</comment>
<comment type="catalytic activity">
    <reaction evidence="2">
        <text>N(6)-succinyl-L-lysyl-[protein] + NAD(+) + H2O = 2''-O-succinyl-ADP-D-ribose + nicotinamide + L-lysyl-[protein]</text>
        <dbReference type="Rhea" id="RHEA:47668"/>
        <dbReference type="Rhea" id="RHEA-COMP:9752"/>
        <dbReference type="Rhea" id="RHEA-COMP:11877"/>
        <dbReference type="ChEBI" id="CHEBI:15377"/>
        <dbReference type="ChEBI" id="CHEBI:17154"/>
        <dbReference type="ChEBI" id="CHEBI:29969"/>
        <dbReference type="ChEBI" id="CHEBI:57540"/>
        <dbReference type="ChEBI" id="CHEBI:87830"/>
        <dbReference type="ChEBI" id="CHEBI:87832"/>
    </reaction>
</comment>
<comment type="catalytic activity">
    <reaction evidence="2">
        <text>N(6)-(2-hydroxyisobutanoyl)-L-lysyl-[protein] + NAD(+) + H2O = 2''-O-(2-hydroxyisobutanoyl)-ADP-D-ribose + nicotinamide + L-lysyl-[protein]</text>
        <dbReference type="Rhea" id="RHEA:24364"/>
        <dbReference type="Rhea" id="RHEA-COMP:9752"/>
        <dbReference type="Rhea" id="RHEA-COMP:15921"/>
        <dbReference type="ChEBI" id="CHEBI:15377"/>
        <dbReference type="ChEBI" id="CHEBI:17154"/>
        <dbReference type="ChEBI" id="CHEBI:29969"/>
        <dbReference type="ChEBI" id="CHEBI:57540"/>
        <dbReference type="ChEBI" id="CHEBI:144968"/>
        <dbReference type="ChEBI" id="CHEBI:144969"/>
    </reaction>
</comment>
<comment type="cofactor">
    <cofactor evidence="2">
        <name>Zn(2+)</name>
        <dbReference type="ChEBI" id="CHEBI:29105"/>
    </cofactor>
    <text evidence="2">Binds 1 zinc ion per subunit.</text>
</comment>
<comment type="subcellular location">
    <subcellularLocation>
        <location evidence="2">Cytoplasm</location>
    </subcellularLocation>
</comment>
<comment type="alternative products">
    <event type="alternative promoter"/>
    <isoform>
        <id>Q669P6-1</id>
        <name evidence="1">CobB-Long</name>
        <sequence type="displayed"/>
    </isoform>
    <isoform>
        <id>Q669P6-2</id>
        <name evidence="1">CobB-Short</name>
        <sequence type="described" ref="VSP_058465"/>
    </isoform>
</comment>
<comment type="domain">
    <text evidence="2">2 residues (Tyr-90 and Arg-93) present in a large hydrophobic pocket are probably involved in substrate specificity. They are important for desuccinylation activity, but dispensable for deacetylation activity.</text>
</comment>
<comment type="similarity">
    <text evidence="2">Belongs to the sirtuin family. Class III subfamily.</text>
</comment>
<name>NPD_YERPS</name>
<evidence type="ECO:0000250" key="1">
    <source>
        <dbReference type="UniProtKB" id="P0A2F2"/>
    </source>
</evidence>
<evidence type="ECO:0000255" key="2">
    <source>
        <dbReference type="HAMAP-Rule" id="MF_01121"/>
    </source>
</evidence>
<evidence type="ECO:0000255" key="3">
    <source>
        <dbReference type="PROSITE-ProRule" id="PRU00236"/>
    </source>
</evidence>
<proteinExistence type="inferred from homology"/>
<keyword id="KW-0877">Alternative promoter usage</keyword>
<keyword id="KW-0963">Cytoplasm</keyword>
<keyword id="KW-0479">Metal-binding</keyword>
<keyword id="KW-0520">NAD</keyword>
<keyword id="KW-0808">Transferase</keyword>
<keyword id="KW-0862">Zinc</keyword>